<protein>
    <recommendedName>
        <fullName evidence="1">Ferrochelatase</fullName>
        <ecNumber evidence="1">4.98.1.1</ecNumber>
    </recommendedName>
    <alternativeName>
        <fullName evidence="1">Heme synthase</fullName>
    </alternativeName>
    <alternativeName>
        <fullName evidence="1">Protoheme ferro-lyase</fullName>
    </alternativeName>
</protein>
<keyword id="KW-0963">Cytoplasm</keyword>
<keyword id="KW-0350">Heme biosynthesis</keyword>
<keyword id="KW-0408">Iron</keyword>
<keyword id="KW-0456">Lyase</keyword>
<keyword id="KW-0479">Metal-binding</keyword>
<keyword id="KW-0627">Porphyrin biosynthesis</keyword>
<name>HEMH_LEGPA</name>
<organism>
    <name type="scientific">Legionella pneumophila (strain Paris)</name>
    <dbReference type="NCBI Taxonomy" id="297246"/>
    <lineage>
        <taxon>Bacteria</taxon>
        <taxon>Pseudomonadati</taxon>
        <taxon>Pseudomonadota</taxon>
        <taxon>Gammaproteobacteria</taxon>
        <taxon>Legionellales</taxon>
        <taxon>Legionellaceae</taxon>
        <taxon>Legionella</taxon>
    </lineage>
</organism>
<evidence type="ECO:0000255" key="1">
    <source>
        <dbReference type="HAMAP-Rule" id="MF_00323"/>
    </source>
</evidence>
<proteinExistence type="inferred from homology"/>
<comment type="function">
    <text evidence="1">Catalyzes the ferrous insertion into protoporphyrin IX.</text>
</comment>
<comment type="catalytic activity">
    <reaction evidence="1">
        <text>heme b + 2 H(+) = protoporphyrin IX + Fe(2+)</text>
        <dbReference type="Rhea" id="RHEA:22584"/>
        <dbReference type="ChEBI" id="CHEBI:15378"/>
        <dbReference type="ChEBI" id="CHEBI:29033"/>
        <dbReference type="ChEBI" id="CHEBI:57306"/>
        <dbReference type="ChEBI" id="CHEBI:60344"/>
        <dbReference type="EC" id="4.98.1.1"/>
    </reaction>
</comment>
<comment type="pathway">
    <text evidence="1">Porphyrin-containing compound metabolism; protoheme biosynthesis; protoheme from protoporphyrin-IX: step 1/1.</text>
</comment>
<comment type="subcellular location">
    <subcellularLocation>
        <location evidence="1">Cytoplasm</location>
    </subcellularLocation>
</comment>
<comment type="similarity">
    <text evidence="1">Belongs to the ferrochelatase family.</text>
</comment>
<sequence length="331" mass="37808">MRRGLLLLNLGTPDNADIRAVKLYLREFLTDKRVIDLPTIPRYILVYCLILPFRSPKSAQAYQSIWTEKGSPLLYHSQNLVTKLQSSLKDEYKIALGMRYGTPSITTALAELKDCHSLTILPLFPQYSSAATGSAIEKTLSYLANQEIIPSIKIIRDFYQRPEYIQAQAKIMKPYIKDNFHVLFSYHGIPERHIHKSGCDTLCPQTCTPIYDKNQACYRAQCYQTSLLLAKELQLGTHQYTTAFQSRLGKTPWIKPYTDEIFAELISKGIKNIVVSCPSFVADCLETLEEIGIRAKEQWEKLGGEQFILTPCMNDHPEWIKAIHSIVNEQI</sequence>
<reference key="1">
    <citation type="journal article" date="2004" name="Nat. Genet.">
        <title>Evidence in the Legionella pneumophila genome for exploitation of host cell functions and high genome plasticity.</title>
        <authorList>
            <person name="Cazalet C."/>
            <person name="Rusniok C."/>
            <person name="Brueggemann H."/>
            <person name="Zidane N."/>
            <person name="Magnier A."/>
            <person name="Ma L."/>
            <person name="Tichit M."/>
            <person name="Jarraud S."/>
            <person name="Bouchier C."/>
            <person name="Vandenesch F."/>
            <person name="Kunst F."/>
            <person name="Etienne J."/>
            <person name="Glaser P."/>
            <person name="Buchrieser C."/>
        </authorList>
    </citation>
    <scope>NUCLEOTIDE SEQUENCE [LARGE SCALE GENOMIC DNA]</scope>
    <source>
        <strain>Paris</strain>
    </source>
</reference>
<feature type="chain" id="PRO_0000175154" description="Ferrochelatase">
    <location>
        <begin position="1"/>
        <end position="331"/>
    </location>
</feature>
<feature type="binding site" evidence="1">
    <location>
        <position position="187"/>
    </location>
    <ligand>
        <name>Fe cation</name>
        <dbReference type="ChEBI" id="CHEBI:24875"/>
    </ligand>
</feature>
<feature type="binding site" evidence="1">
    <location>
        <position position="286"/>
    </location>
    <ligand>
        <name>Fe cation</name>
        <dbReference type="ChEBI" id="CHEBI:24875"/>
    </ligand>
</feature>
<accession>Q5X7W3</accession>
<dbReference type="EC" id="4.98.1.1" evidence="1"/>
<dbReference type="EMBL" id="CR628336">
    <property type="protein sequence ID" value="CAH11640.1"/>
    <property type="molecule type" value="Genomic_DNA"/>
</dbReference>
<dbReference type="RefSeq" id="WP_011213072.1">
    <property type="nucleotide sequence ID" value="NC_006368.1"/>
</dbReference>
<dbReference type="SMR" id="Q5X7W3"/>
<dbReference type="KEGG" id="lpp:lpp0492"/>
<dbReference type="LegioList" id="lpp0492"/>
<dbReference type="HOGENOM" id="CLU_018884_0_1_6"/>
<dbReference type="UniPathway" id="UPA00252">
    <property type="reaction ID" value="UER00325"/>
</dbReference>
<dbReference type="GO" id="GO:0005737">
    <property type="term" value="C:cytoplasm"/>
    <property type="evidence" value="ECO:0007669"/>
    <property type="project" value="UniProtKB-SubCell"/>
</dbReference>
<dbReference type="GO" id="GO:0004325">
    <property type="term" value="F:ferrochelatase activity"/>
    <property type="evidence" value="ECO:0007669"/>
    <property type="project" value="UniProtKB-UniRule"/>
</dbReference>
<dbReference type="GO" id="GO:0046872">
    <property type="term" value="F:metal ion binding"/>
    <property type="evidence" value="ECO:0007669"/>
    <property type="project" value="UniProtKB-KW"/>
</dbReference>
<dbReference type="GO" id="GO:0006783">
    <property type="term" value="P:heme biosynthetic process"/>
    <property type="evidence" value="ECO:0007669"/>
    <property type="project" value="UniProtKB-UniRule"/>
</dbReference>
<dbReference type="CDD" id="cd00419">
    <property type="entry name" value="Ferrochelatase_C"/>
    <property type="match status" value="1"/>
</dbReference>
<dbReference type="CDD" id="cd03411">
    <property type="entry name" value="Ferrochelatase_N"/>
    <property type="match status" value="1"/>
</dbReference>
<dbReference type="Gene3D" id="3.40.50.1400">
    <property type="match status" value="2"/>
</dbReference>
<dbReference type="HAMAP" id="MF_00323">
    <property type="entry name" value="Ferrochelatase"/>
    <property type="match status" value="1"/>
</dbReference>
<dbReference type="InterPro" id="IPR001015">
    <property type="entry name" value="Ferrochelatase"/>
</dbReference>
<dbReference type="InterPro" id="IPR033644">
    <property type="entry name" value="Ferrochelatase_C"/>
</dbReference>
<dbReference type="InterPro" id="IPR033659">
    <property type="entry name" value="Ferrochelatase_N"/>
</dbReference>
<dbReference type="NCBIfam" id="TIGR00109">
    <property type="entry name" value="hemH"/>
    <property type="match status" value="1"/>
</dbReference>
<dbReference type="PANTHER" id="PTHR11108">
    <property type="entry name" value="FERROCHELATASE"/>
    <property type="match status" value="1"/>
</dbReference>
<dbReference type="PANTHER" id="PTHR11108:SF1">
    <property type="entry name" value="FERROCHELATASE, MITOCHONDRIAL"/>
    <property type="match status" value="1"/>
</dbReference>
<dbReference type="Pfam" id="PF00762">
    <property type="entry name" value="Ferrochelatase"/>
    <property type="match status" value="1"/>
</dbReference>
<dbReference type="SUPFAM" id="SSF53800">
    <property type="entry name" value="Chelatase"/>
    <property type="match status" value="1"/>
</dbReference>
<gene>
    <name evidence="1" type="primary">hemH</name>
    <name type="ordered locus">lpp0492</name>
</gene>